<protein>
    <recommendedName>
        <fullName>Uncharacterized protein y4eI</fullName>
    </recommendedName>
</protein>
<sequence>MAAAAMPLEELERWLQARVDRQPIATSLAMLDGYVAAIVAGPVSMSPLDWICPLLAIDADAFNHGDTPEFAAIFAVALRHNDISNVLRPRPTSSSRCTGANPW</sequence>
<name>Y4EI_SINFN</name>
<evidence type="ECO:0000255" key="1"/>
<evidence type="ECO:0000305" key="2"/>
<accession>P55432</accession>
<feature type="chain" id="PRO_0000200831" description="Uncharacterized protein y4eI">
    <location>
        <begin position="1"/>
        <end position="103"/>
    </location>
</feature>
<feature type="transmembrane region" description="Helical" evidence="1">
    <location>
        <begin position="33"/>
        <end position="57"/>
    </location>
</feature>
<reference key="1">
    <citation type="journal article" date="1997" name="Nature">
        <title>Molecular basis of symbiosis between Rhizobium and legumes.</title>
        <authorList>
            <person name="Freiberg C.A."/>
            <person name="Fellay R."/>
            <person name="Bairoch A."/>
            <person name="Broughton W.J."/>
            <person name="Rosenthal A."/>
            <person name="Perret X."/>
        </authorList>
    </citation>
    <scope>NUCLEOTIDE SEQUENCE [LARGE SCALE GENOMIC DNA]</scope>
    <source>
        <strain>NBRC 101917 / NGR234</strain>
    </source>
</reference>
<reference key="2">
    <citation type="journal article" date="2009" name="Appl. Environ. Microbiol.">
        <title>Rhizobium sp. strain NGR234 possesses a remarkable number of secretion systems.</title>
        <authorList>
            <person name="Schmeisser C."/>
            <person name="Liesegang H."/>
            <person name="Krysciak D."/>
            <person name="Bakkou N."/>
            <person name="Le Quere A."/>
            <person name="Wollherr A."/>
            <person name="Heinemeyer I."/>
            <person name="Morgenstern B."/>
            <person name="Pommerening-Roeser A."/>
            <person name="Flores M."/>
            <person name="Palacios R."/>
            <person name="Brenner S."/>
            <person name="Gottschalk G."/>
            <person name="Schmitz R.A."/>
            <person name="Broughton W.J."/>
            <person name="Perret X."/>
            <person name="Strittmatter A.W."/>
            <person name="Streit W.R."/>
        </authorList>
    </citation>
    <scope>NUCLEOTIDE SEQUENCE [LARGE SCALE GENOMIC DNA]</scope>
    <source>
        <strain>NBRC 101917 / NGR234</strain>
    </source>
</reference>
<proteinExistence type="predicted"/>
<comment type="subcellular location">
    <subcellularLocation>
        <location evidence="2">Membrane</location>
        <topology evidence="2">Single-pass membrane protein</topology>
    </subcellularLocation>
</comment>
<organism>
    <name type="scientific">Sinorhizobium fredii (strain NBRC 101917 / NGR234)</name>
    <dbReference type="NCBI Taxonomy" id="394"/>
    <lineage>
        <taxon>Bacteria</taxon>
        <taxon>Pseudomonadati</taxon>
        <taxon>Pseudomonadota</taxon>
        <taxon>Alphaproteobacteria</taxon>
        <taxon>Hyphomicrobiales</taxon>
        <taxon>Rhizobiaceae</taxon>
        <taxon>Sinorhizobium/Ensifer group</taxon>
        <taxon>Sinorhizobium</taxon>
    </lineage>
</organism>
<dbReference type="EMBL" id="U00090">
    <property type="protein sequence ID" value="AAB91653.1"/>
    <property type="molecule type" value="Genomic_DNA"/>
</dbReference>
<dbReference type="RefSeq" id="NP_443841.1">
    <property type="nucleotide sequence ID" value="NC_000914.2"/>
</dbReference>
<dbReference type="RefSeq" id="WP_010875397.1">
    <property type="nucleotide sequence ID" value="NC_000914.2"/>
</dbReference>
<dbReference type="SMR" id="P55432"/>
<dbReference type="KEGG" id="rhi:NGR_a03850"/>
<dbReference type="PATRIC" id="fig|394.7.peg.400"/>
<dbReference type="eggNOG" id="COG3318">
    <property type="taxonomic scope" value="Bacteria"/>
</dbReference>
<dbReference type="HOGENOM" id="CLU_2261567_0_0_5"/>
<dbReference type="OrthoDB" id="7498017at2"/>
<dbReference type="Proteomes" id="UP000001054">
    <property type="component" value="Plasmid pNGR234a"/>
</dbReference>
<dbReference type="GO" id="GO:0016020">
    <property type="term" value="C:membrane"/>
    <property type="evidence" value="ECO:0007669"/>
    <property type="project" value="UniProtKB-SubCell"/>
</dbReference>
<dbReference type="InterPro" id="IPR011978">
    <property type="entry name" value="YgfB-like"/>
</dbReference>
<dbReference type="InterPro" id="IPR036255">
    <property type="entry name" value="YgfB-like_sf"/>
</dbReference>
<dbReference type="Pfam" id="PF03695">
    <property type="entry name" value="UPF0149"/>
    <property type="match status" value="1"/>
</dbReference>
<dbReference type="SUPFAM" id="SSF101327">
    <property type="entry name" value="YgfB-like"/>
    <property type="match status" value="1"/>
</dbReference>
<gene>
    <name type="ordered locus">NGR_a03850</name>
    <name type="ORF">y4eI</name>
</gene>
<geneLocation type="plasmid">
    <name>sym pNGR234a</name>
</geneLocation>
<keyword id="KW-0472">Membrane</keyword>
<keyword id="KW-0614">Plasmid</keyword>
<keyword id="KW-1185">Reference proteome</keyword>
<keyword id="KW-0812">Transmembrane</keyword>
<keyword id="KW-1133">Transmembrane helix</keyword>